<evidence type="ECO:0000255" key="1">
    <source>
        <dbReference type="HAMAP-Rule" id="MF_01719"/>
    </source>
</evidence>
<keyword id="KW-0029">Amino-acid transport</keyword>
<keyword id="KW-0067">ATP-binding</keyword>
<keyword id="KW-0997">Cell inner membrane</keyword>
<keyword id="KW-1003">Cell membrane</keyword>
<keyword id="KW-0472">Membrane</keyword>
<keyword id="KW-0547">Nucleotide-binding</keyword>
<keyword id="KW-1278">Translocase</keyword>
<keyword id="KW-0813">Transport</keyword>
<gene>
    <name evidence="1" type="primary">metN1</name>
    <name type="ordered locus">YPA_0550</name>
</gene>
<accession>Q1CAK4</accession>
<reference key="1">
    <citation type="journal article" date="2006" name="J. Bacteriol.">
        <title>Complete genome sequence of Yersinia pestis strains Antiqua and Nepal516: evidence of gene reduction in an emerging pathogen.</title>
        <authorList>
            <person name="Chain P.S.G."/>
            <person name="Hu P."/>
            <person name="Malfatti S.A."/>
            <person name="Radnedge L."/>
            <person name="Larimer F."/>
            <person name="Vergez L.M."/>
            <person name="Worsham P."/>
            <person name="Chu M.C."/>
            <person name="Andersen G.L."/>
        </authorList>
    </citation>
    <scope>NUCLEOTIDE SEQUENCE [LARGE SCALE GENOMIC DNA]</scope>
    <source>
        <strain>Antiqua</strain>
    </source>
</reference>
<proteinExistence type="inferred from homology"/>
<protein>
    <recommendedName>
        <fullName evidence="1">Methionine import ATP-binding protein MetN 1</fullName>
        <ecNumber evidence="1">7.4.2.11</ecNumber>
    </recommendedName>
</protein>
<comment type="function">
    <text evidence="1">Part of the ABC transporter complex MetNIQ involved in methionine import. Responsible for energy coupling to the transport system.</text>
</comment>
<comment type="catalytic activity">
    <reaction evidence="1">
        <text>L-methionine(out) + ATP + H2O = L-methionine(in) + ADP + phosphate + H(+)</text>
        <dbReference type="Rhea" id="RHEA:29779"/>
        <dbReference type="ChEBI" id="CHEBI:15377"/>
        <dbReference type="ChEBI" id="CHEBI:15378"/>
        <dbReference type="ChEBI" id="CHEBI:30616"/>
        <dbReference type="ChEBI" id="CHEBI:43474"/>
        <dbReference type="ChEBI" id="CHEBI:57844"/>
        <dbReference type="ChEBI" id="CHEBI:456216"/>
        <dbReference type="EC" id="7.4.2.11"/>
    </reaction>
</comment>
<comment type="catalytic activity">
    <reaction evidence="1">
        <text>D-methionine(out) + ATP + H2O = D-methionine(in) + ADP + phosphate + H(+)</text>
        <dbReference type="Rhea" id="RHEA:29767"/>
        <dbReference type="ChEBI" id="CHEBI:15377"/>
        <dbReference type="ChEBI" id="CHEBI:15378"/>
        <dbReference type="ChEBI" id="CHEBI:30616"/>
        <dbReference type="ChEBI" id="CHEBI:43474"/>
        <dbReference type="ChEBI" id="CHEBI:57932"/>
        <dbReference type="ChEBI" id="CHEBI:456216"/>
        <dbReference type="EC" id="7.4.2.11"/>
    </reaction>
</comment>
<comment type="subunit">
    <text evidence="1">The complex is composed of two ATP-binding proteins (MetN), two transmembrane proteins (MetI) and a solute-binding protein (MetQ).</text>
</comment>
<comment type="subcellular location">
    <subcellularLocation>
        <location evidence="1">Cell inner membrane</location>
        <topology evidence="1">Peripheral membrane protein</topology>
    </subcellularLocation>
</comment>
<comment type="similarity">
    <text evidence="1">Belongs to the ABC transporter superfamily. Methionine importer (TC 3.A.1.24) family.</text>
</comment>
<feature type="chain" id="PRO_0000270448" description="Methionine import ATP-binding protein MetN 1">
    <location>
        <begin position="1"/>
        <end position="343"/>
    </location>
</feature>
<feature type="domain" description="ABC transporter" evidence="1">
    <location>
        <begin position="2"/>
        <end position="241"/>
    </location>
</feature>
<feature type="binding site" evidence="1">
    <location>
        <begin position="38"/>
        <end position="45"/>
    </location>
    <ligand>
        <name>ATP</name>
        <dbReference type="ChEBI" id="CHEBI:30616"/>
    </ligand>
</feature>
<name>METN1_YERPA</name>
<organism>
    <name type="scientific">Yersinia pestis bv. Antiqua (strain Antiqua)</name>
    <dbReference type="NCBI Taxonomy" id="360102"/>
    <lineage>
        <taxon>Bacteria</taxon>
        <taxon>Pseudomonadati</taxon>
        <taxon>Pseudomonadota</taxon>
        <taxon>Gammaproteobacteria</taxon>
        <taxon>Enterobacterales</taxon>
        <taxon>Yersiniaceae</taxon>
        <taxon>Yersinia</taxon>
    </lineage>
</organism>
<dbReference type="EC" id="7.4.2.11" evidence="1"/>
<dbReference type="EMBL" id="CP000308">
    <property type="protein sequence ID" value="ABG12518.1"/>
    <property type="molecule type" value="Genomic_DNA"/>
</dbReference>
<dbReference type="SMR" id="Q1CAK4"/>
<dbReference type="KEGG" id="ypa:YPA_0550"/>
<dbReference type="Proteomes" id="UP000001971">
    <property type="component" value="Chromosome"/>
</dbReference>
<dbReference type="GO" id="GO:0009276">
    <property type="term" value="C:Gram-negative-bacterium-type cell wall"/>
    <property type="evidence" value="ECO:0007669"/>
    <property type="project" value="InterPro"/>
</dbReference>
<dbReference type="GO" id="GO:0005886">
    <property type="term" value="C:plasma membrane"/>
    <property type="evidence" value="ECO:0007669"/>
    <property type="project" value="UniProtKB-SubCell"/>
</dbReference>
<dbReference type="GO" id="GO:0033232">
    <property type="term" value="F:ABC-type D-methionine transporter activity"/>
    <property type="evidence" value="ECO:0007669"/>
    <property type="project" value="UniProtKB-EC"/>
</dbReference>
<dbReference type="GO" id="GO:0005524">
    <property type="term" value="F:ATP binding"/>
    <property type="evidence" value="ECO:0007669"/>
    <property type="project" value="UniProtKB-KW"/>
</dbReference>
<dbReference type="GO" id="GO:0016887">
    <property type="term" value="F:ATP hydrolysis activity"/>
    <property type="evidence" value="ECO:0007669"/>
    <property type="project" value="InterPro"/>
</dbReference>
<dbReference type="CDD" id="cd03258">
    <property type="entry name" value="ABC_MetN_methionine_transporter"/>
    <property type="match status" value="1"/>
</dbReference>
<dbReference type="FunFam" id="3.40.50.300:FF:000233">
    <property type="entry name" value="Methionine import ATP-binding protein MetN"/>
    <property type="match status" value="1"/>
</dbReference>
<dbReference type="Gene3D" id="3.30.70.260">
    <property type="match status" value="1"/>
</dbReference>
<dbReference type="Gene3D" id="3.40.50.300">
    <property type="entry name" value="P-loop containing nucleotide triphosphate hydrolases"/>
    <property type="match status" value="1"/>
</dbReference>
<dbReference type="InterPro" id="IPR003593">
    <property type="entry name" value="AAA+_ATPase"/>
</dbReference>
<dbReference type="InterPro" id="IPR012692">
    <property type="entry name" value="ABC_MetN_proteobac"/>
</dbReference>
<dbReference type="InterPro" id="IPR003439">
    <property type="entry name" value="ABC_transporter-like_ATP-bd"/>
</dbReference>
<dbReference type="InterPro" id="IPR017871">
    <property type="entry name" value="ABC_transporter-like_CS"/>
</dbReference>
<dbReference type="InterPro" id="IPR045865">
    <property type="entry name" value="ACT-like_dom_sf"/>
</dbReference>
<dbReference type="InterPro" id="IPR041701">
    <property type="entry name" value="MetN_ABC"/>
</dbReference>
<dbReference type="InterPro" id="IPR050086">
    <property type="entry name" value="MetN_ABC_transporter-like"/>
</dbReference>
<dbReference type="InterPro" id="IPR018449">
    <property type="entry name" value="NIL_domain"/>
</dbReference>
<dbReference type="InterPro" id="IPR027417">
    <property type="entry name" value="P-loop_NTPase"/>
</dbReference>
<dbReference type="NCBIfam" id="TIGR02314">
    <property type="entry name" value="ABC_MetN"/>
    <property type="match status" value="1"/>
</dbReference>
<dbReference type="PANTHER" id="PTHR43166">
    <property type="entry name" value="AMINO ACID IMPORT ATP-BINDING PROTEIN"/>
    <property type="match status" value="1"/>
</dbReference>
<dbReference type="PANTHER" id="PTHR43166:SF30">
    <property type="entry name" value="METHIONINE IMPORT ATP-BINDING PROTEIN METN"/>
    <property type="match status" value="1"/>
</dbReference>
<dbReference type="Pfam" id="PF00005">
    <property type="entry name" value="ABC_tran"/>
    <property type="match status" value="1"/>
</dbReference>
<dbReference type="Pfam" id="PF09383">
    <property type="entry name" value="NIL"/>
    <property type="match status" value="1"/>
</dbReference>
<dbReference type="SMART" id="SM00382">
    <property type="entry name" value="AAA"/>
    <property type="match status" value="1"/>
</dbReference>
<dbReference type="SMART" id="SM00930">
    <property type="entry name" value="NIL"/>
    <property type="match status" value="1"/>
</dbReference>
<dbReference type="SUPFAM" id="SSF55021">
    <property type="entry name" value="ACT-like"/>
    <property type="match status" value="1"/>
</dbReference>
<dbReference type="SUPFAM" id="SSF52540">
    <property type="entry name" value="P-loop containing nucleoside triphosphate hydrolases"/>
    <property type="match status" value="1"/>
</dbReference>
<dbReference type="PROSITE" id="PS00211">
    <property type="entry name" value="ABC_TRANSPORTER_1"/>
    <property type="match status" value="1"/>
</dbReference>
<dbReference type="PROSITE" id="PS50893">
    <property type="entry name" value="ABC_TRANSPORTER_2"/>
    <property type="match status" value="1"/>
</dbReference>
<dbReference type="PROSITE" id="PS51264">
    <property type="entry name" value="METN"/>
    <property type="match status" value="1"/>
</dbReference>
<sequence length="343" mass="37533">MIKLTHISKVFQQGSRTITALSDVSLHVPAGQIYGVIGASGAGKSTLIRCANMLERPTSGQVLVDDQDLTTLSEGQLTRARRQIGMIFQHFNLLSSRTVYGNIALPLELDNTSRADIKKRVNELLDLVGLTDKQDAYPANLSGGQKQRVAIARALASNPKVLLCDEATSALDPATTRSILELLKDINRRLGLTILLITHEMDVVKRICDQVAVISEGKLIEKDSVSEVFSHPKTPLAQQFIQSTLHLDIPEDYAKRMSPEPTVDHVPLLKLEFTGKSVDAPLISQAVRRFNIDIGILSSQMDYAGGVKFGVMLAELHGDVQDGLAAIKFLQDHHVKVEVLGYV</sequence>